<name>GPMA_ECOL5</name>
<protein>
    <recommendedName>
        <fullName evidence="1">2,3-bisphosphoglycerate-dependent phosphoglycerate mutase</fullName>
        <shortName evidence="1">BPG-dependent PGAM</shortName>
        <shortName evidence="1">PGAM</shortName>
        <shortName evidence="1">Phosphoglyceromutase</shortName>
        <shortName evidence="1">dPGM</shortName>
        <ecNumber evidence="1">5.4.2.11</ecNumber>
    </recommendedName>
</protein>
<sequence length="250" mass="28556">MAVTKLVLVRHGESQWNKENRFTGWYDVDLSEKGVSEAKAAGKLLKEEGYSFDFAYTSVLKRAIHTLWNVLDELDQAWLPVEKSWKLNERHYGALQGLNKAETAEKYGDEQVKQWRRGFAVTPPELTKDDERYPGHDPRYAKLSEKELPLTESLALTIDRVIPYWNETILPRMKSGERVIIAAHGNSLRALVKYLDNMSEEEILELNIPTGVPLVYEFDENFKPLKRYYLGNADEIAAKAAAVANQGKAK</sequence>
<keyword id="KW-0312">Gluconeogenesis</keyword>
<keyword id="KW-0324">Glycolysis</keyword>
<keyword id="KW-0413">Isomerase</keyword>
<accession>Q0TJU6</accession>
<gene>
    <name evidence="1" type="primary">gpmA</name>
    <name type="ordered locus">ECP_0766</name>
</gene>
<feature type="chain" id="PRO_1000064057" description="2,3-bisphosphoglycerate-dependent phosphoglycerate mutase">
    <location>
        <begin position="1"/>
        <end position="250"/>
    </location>
</feature>
<feature type="active site" description="Tele-phosphohistidine intermediate" evidence="1">
    <location>
        <position position="11"/>
    </location>
</feature>
<feature type="active site" description="Proton donor/acceptor" evidence="1">
    <location>
        <position position="89"/>
    </location>
</feature>
<feature type="binding site" evidence="1">
    <location>
        <begin position="10"/>
        <end position="17"/>
    </location>
    <ligand>
        <name>substrate</name>
    </ligand>
</feature>
<feature type="binding site" evidence="1">
    <location>
        <begin position="23"/>
        <end position="24"/>
    </location>
    <ligand>
        <name>substrate</name>
    </ligand>
</feature>
<feature type="binding site" evidence="1">
    <location>
        <position position="62"/>
    </location>
    <ligand>
        <name>substrate</name>
    </ligand>
</feature>
<feature type="binding site" evidence="1">
    <location>
        <begin position="89"/>
        <end position="92"/>
    </location>
    <ligand>
        <name>substrate</name>
    </ligand>
</feature>
<feature type="binding site" evidence="1">
    <location>
        <position position="100"/>
    </location>
    <ligand>
        <name>substrate</name>
    </ligand>
</feature>
<feature type="binding site" evidence="1">
    <location>
        <begin position="116"/>
        <end position="117"/>
    </location>
    <ligand>
        <name>substrate</name>
    </ligand>
</feature>
<feature type="binding site" evidence="1">
    <location>
        <begin position="185"/>
        <end position="186"/>
    </location>
    <ligand>
        <name>substrate</name>
    </ligand>
</feature>
<feature type="site" description="Transition state stabilizer" evidence="1">
    <location>
        <position position="184"/>
    </location>
</feature>
<reference key="1">
    <citation type="journal article" date="2006" name="Mol. Microbiol.">
        <title>Role of pathogenicity island-associated integrases in the genome plasticity of uropathogenic Escherichia coli strain 536.</title>
        <authorList>
            <person name="Hochhut B."/>
            <person name="Wilde C."/>
            <person name="Balling G."/>
            <person name="Middendorf B."/>
            <person name="Dobrindt U."/>
            <person name="Brzuszkiewicz E."/>
            <person name="Gottschalk G."/>
            <person name="Carniel E."/>
            <person name="Hacker J."/>
        </authorList>
    </citation>
    <scope>NUCLEOTIDE SEQUENCE [LARGE SCALE GENOMIC DNA]</scope>
    <source>
        <strain>536 / UPEC</strain>
    </source>
</reference>
<dbReference type="EC" id="5.4.2.11" evidence="1"/>
<dbReference type="EMBL" id="CP000247">
    <property type="protein sequence ID" value="ABG68785.1"/>
    <property type="molecule type" value="Genomic_DNA"/>
</dbReference>
<dbReference type="RefSeq" id="WP_001295305.1">
    <property type="nucleotide sequence ID" value="NC_008253.1"/>
</dbReference>
<dbReference type="SMR" id="Q0TJU6"/>
<dbReference type="GeneID" id="93776726"/>
<dbReference type="KEGG" id="ecp:ECP_0766"/>
<dbReference type="HOGENOM" id="CLU_033323_1_1_6"/>
<dbReference type="UniPathway" id="UPA00109">
    <property type="reaction ID" value="UER00186"/>
</dbReference>
<dbReference type="Proteomes" id="UP000009182">
    <property type="component" value="Chromosome"/>
</dbReference>
<dbReference type="GO" id="GO:0004619">
    <property type="term" value="F:phosphoglycerate mutase activity"/>
    <property type="evidence" value="ECO:0007669"/>
    <property type="project" value="UniProtKB-EC"/>
</dbReference>
<dbReference type="GO" id="GO:0006094">
    <property type="term" value="P:gluconeogenesis"/>
    <property type="evidence" value="ECO:0007669"/>
    <property type="project" value="UniProtKB-UniRule"/>
</dbReference>
<dbReference type="GO" id="GO:0006096">
    <property type="term" value="P:glycolytic process"/>
    <property type="evidence" value="ECO:0007669"/>
    <property type="project" value="UniProtKB-UniRule"/>
</dbReference>
<dbReference type="CDD" id="cd07067">
    <property type="entry name" value="HP_PGM_like"/>
    <property type="match status" value="1"/>
</dbReference>
<dbReference type="FunFam" id="3.40.50.1240:FF:000003">
    <property type="entry name" value="2,3-bisphosphoglycerate-dependent phosphoglycerate mutase"/>
    <property type="match status" value="1"/>
</dbReference>
<dbReference type="Gene3D" id="3.40.50.1240">
    <property type="entry name" value="Phosphoglycerate mutase-like"/>
    <property type="match status" value="1"/>
</dbReference>
<dbReference type="HAMAP" id="MF_01039">
    <property type="entry name" value="PGAM_GpmA"/>
    <property type="match status" value="1"/>
</dbReference>
<dbReference type="InterPro" id="IPR013078">
    <property type="entry name" value="His_Pase_superF_clade-1"/>
</dbReference>
<dbReference type="InterPro" id="IPR029033">
    <property type="entry name" value="His_PPase_superfam"/>
</dbReference>
<dbReference type="InterPro" id="IPR001345">
    <property type="entry name" value="PG/BPGM_mutase_AS"/>
</dbReference>
<dbReference type="InterPro" id="IPR005952">
    <property type="entry name" value="Phosphogly_mut1"/>
</dbReference>
<dbReference type="NCBIfam" id="TIGR01258">
    <property type="entry name" value="pgm_1"/>
    <property type="match status" value="1"/>
</dbReference>
<dbReference type="NCBIfam" id="NF010713">
    <property type="entry name" value="PRK14115.1"/>
    <property type="match status" value="1"/>
</dbReference>
<dbReference type="PANTHER" id="PTHR11931">
    <property type="entry name" value="PHOSPHOGLYCERATE MUTASE"/>
    <property type="match status" value="1"/>
</dbReference>
<dbReference type="Pfam" id="PF00300">
    <property type="entry name" value="His_Phos_1"/>
    <property type="match status" value="1"/>
</dbReference>
<dbReference type="PIRSF" id="PIRSF000709">
    <property type="entry name" value="6PFK_2-Ptase"/>
    <property type="match status" value="1"/>
</dbReference>
<dbReference type="SMART" id="SM00855">
    <property type="entry name" value="PGAM"/>
    <property type="match status" value="1"/>
</dbReference>
<dbReference type="SUPFAM" id="SSF53254">
    <property type="entry name" value="Phosphoglycerate mutase-like"/>
    <property type="match status" value="1"/>
</dbReference>
<dbReference type="PROSITE" id="PS00175">
    <property type="entry name" value="PG_MUTASE"/>
    <property type="match status" value="1"/>
</dbReference>
<evidence type="ECO:0000255" key="1">
    <source>
        <dbReference type="HAMAP-Rule" id="MF_01039"/>
    </source>
</evidence>
<organism>
    <name type="scientific">Escherichia coli O6:K15:H31 (strain 536 / UPEC)</name>
    <dbReference type="NCBI Taxonomy" id="362663"/>
    <lineage>
        <taxon>Bacteria</taxon>
        <taxon>Pseudomonadati</taxon>
        <taxon>Pseudomonadota</taxon>
        <taxon>Gammaproteobacteria</taxon>
        <taxon>Enterobacterales</taxon>
        <taxon>Enterobacteriaceae</taxon>
        <taxon>Escherichia</taxon>
    </lineage>
</organism>
<comment type="function">
    <text evidence="1">Catalyzes the interconversion of 2-phosphoglycerate and 3-phosphoglycerate.</text>
</comment>
<comment type="catalytic activity">
    <reaction evidence="1">
        <text>(2R)-2-phosphoglycerate = (2R)-3-phosphoglycerate</text>
        <dbReference type="Rhea" id="RHEA:15901"/>
        <dbReference type="ChEBI" id="CHEBI:58272"/>
        <dbReference type="ChEBI" id="CHEBI:58289"/>
        <dbReference type="EC" id="5.4.2.11"/>
    </reaction>
</comment>
<comment type="pathway">
    <text evidence="1">Carbohydrate degradation; glycolysis; pyruvate from D-glyceraldehyde 3-phosphate: step 3/5.</text>
</comment>
<comment type="subunit">
    <text evidence="1">Homodimer.</text>
</comment>
<comment type="similarity">
    <text evidence="1">Belongs to the phosphoglycerate mutase family. BPG-dependent PGAM subfamily.</text>
</comment>
<proteinExistence type="inferred from homology"/>